<organism>
    <name type="scientific">Thermococcus cleftensis (strain DSM 27260 / KACC 17922 / CL1)</name>
    <dbReference type="NCBI Taxonomy" id="163003"/>
    <lineage>
        <taxon>Archaea</taxon>
        <taxon>Methanobacteriati</taxon>
        <taxon>Methanobacteriota</taxon>
        <taxon>Thermococci</taxon>
        <taxon>Thermococcales</taxon>
        <taxon>Thermococcaceae</taxon>
        <taxon>Thermococcus</taxon>
    </lineage>
</organism>
<dbReference type="EC" id="2.7.7.108" evidence="3"/>
<dbReference type="EMBL" id="CP003651">
    <property type="protein sequence ID" value="AFL94285.1"/>
    <property type="molecule type" value="Genomic_DNA"/>
</dbReference>
<dbReference type="RefSeq" id="WP_014787926.1">
    <property type="nucleotide sequence ID" value="NC_018015.1"/>
</dbReference>
<dbReference type="SMR" id="I3ZRF1"/>
<dbReference type="STRING" id="163003.CL1_0070"/>
<dbReference type="GeneID" id="13038726"/>
<dbReference type="KEGG" id="thm:CL1_0070"/>
<dbReference type="HOGENOM" id="CLU_130257_10_0_2"/>
<dbReference type="Proteomes" id="UP000006064">
    <property type="component" value="Chromosome"/>
</dbReference>
<dbReference type="GO" id="GO:0005524">
    <property type="term" value="F:ATP binding"/>
    <property type="evidence" value="ECO:0007669"/>
    <property type="project" value="UniProtKB-KW"/>
</dbReference>
<dbReference type="GO" id="GO:0046872">
    <property type="term" value="F:metal ion binding"/>
    <property type="evidence" value="ECO:0007669"/>
    <property type="project" value="UniProtKB-KW"/>
</dbReference>
<dbReference type="GO" id="GO:0016779">
    <property type="term" value="F:nucleotidyltransferase activity"/>
    <property type="evidence" value="ECO:0007669"/>
    <property type="project" value="UniProtKB-KW"/>
</dbReference>
<dbReference type="CDD" id="cd05403">
    <property type="entry name" value="NT_KNTase_like"/>
    <property type="match status" value="1"/>
</dbReference>
<dbReference type="Gene3D" id="3.30.460.10">
    <property type="entry name" value="Beta Polymerase, domain 2"/>
    <property type="match status" value="1"/>
</dbReference>
<dbReference type="InterPro" id="IPR043519">
    <property type="entry name" value="NT_sf"/>
</dbReference>
<dbReference type="InterPro" id="IPR002934">
    <property type="entry name" value="Polymerase_NTP_transf_dom"/>
</dbReference>
<dbReference type="InterPro" id="IPR052038">
    <property type="entry name" value="Type-VII_TA_antitoxin"/>
</dbReference>
<dbReference type="PANTHER" id="PTHR33571:SF19">
    <property type="entry name" value="PROTEIN ADENYLYLTRANSFERASE MJ0128-RELATED"/>
    <property type="match status" value="1"/>
</dbReference>
<dbReference type="PANTHER" id="PTHR33571">
    <property type="entry name" value="SSL8005 PROTEIN"/>
    <property type="match status" value="1"/>
</dbReference>
<dbReference type="Pfam" id="PF01909">
    <property type="entry name" value="NTP_transf_2"/>
    <property type="match status" value="1"/>
</dbReference>
<dbReference type="SUPFAM" id="SSF81301">
    <property type="entry name" value="Nucleotidyltransferase"/>
    <property type="match status" value="1"/>
</dbReference>
<evidence type="ECO:0000250" key="1">
    <source>
        <dbReference type="UniProtKB" id="A0A0B0QJN8"/>
    </source>
</evidence>
<evidence type="ECO:0000250" key="2">
    <source>
        <dbReference type="UniProtKB" id="Q8ECH7"/>
    </source>
</evidence>
<evidence type="ECO:0000269" key="3">
    <source>
    </source>
</evidence>
<evidence type="ECO:0000303" key="4">
    <source>
    </source>
</evidence>
<evidence type="ECO:0000305" key="5"/>
<gene>
    <name evidence="4" type="primary">mntA</name>
    <name type="ORF">CL1_0070</name>
</gene>
<reference key="1">
    <citation type="journal article" date="2012" name="J. Bacteriol.">
        <title>Complete Genome Sequence of the Hyperthermophilic Archaeon Thermococcus sp. Strain CL1, Isolated from a Paralvinella sp. Polychaete Worm Collected from a Hydrothermal Vent.</title>
        <authorList>
            <person name="Jung J.H."/>
            <person name="Holden J.F."/>
            <person name="Seo D.H."/>
            <person name="Park K.H."/>
            <person name="Shin H."/>
            <person name="Ryu S."/>
            <person name="Lee J.H."/>
            <person name="Park C.S."/>
        </authorList>
    </citation>
    <scope>NUCLEOTIDE SEQUENCE [LARGE SCALE GENOMIC DNA]</scope>
    <source>
        <strain>DSM 27260 / KACC 17922 / CL1</strain>
    </source>
</reference>
<reference key="2">
    <citation type="journal article" date="2020" name="Nucleic Acids Res.">
        <title>Novel polyadenylylation-dependent neutralization mechanism of the HEPN/MNT toxin/antitoxin system.</title>
        <authorList>
            <person name="Yao J."/>
            <person name="Zhen X."/>
            <person name="Tang K."/>
            <person name="Liu T."/>
            <person name="Xu X."/>
            <person name="Chen Z."/>
            <person name="Guo Y."/>
            <person name="Liu X."/>
            <person name="Wood T.K."/>
            <person name="Ouyang S."/>
            <person name="Wang X."/>
        </authorList>
    </citation>
    <scope>FUNCTION AS AN ANTITOXIN</scope>
    <scope>MUTAGENESIS OF 33-GLY-SER-34 AND 45-ASP--ASP-47</scope>
    <source>
        <strain>DSM 27260 / KACC 17922 / CL1</strain>
    </source>
</reference>
<comment type="function">
    <text evidence="3">Antitoxin component of a type VII toxin-antitoxin (TA) system. Overexpression in E.coli neutralizes the toxic effect of cognate toxin HepT. Neutralization is mostly due to AMPylation of the toxin by this enzyme.</text>
</comment>
<comment type="catalytic activity">
    <reaction evidence="3">
        <text>L-tyrosyl-[protein] + ATP = O-(5'-adenylyl)-L-tyrosyl-[protein] + diphosphate</text>
        <dbReference type="Rhea" id="RHEA:54288"/>
        <dbReference type="Rhea" id="RHEA-COMP:10136"/>
        <dbReference type="Rhea" id="RHEA-COMP:13846"/>
        <dbReference type="ChEBI" id="CHEBI:30616"/>
        <dbReference type="ChEBI" id="CHEBI:33019"/>
        <dbReference type="ChEBI" id="CHEBI:46858"/>
        <dbReference type="ChEBI" id="CHEBI:83624"/>
        <dbReference type="EC" id="2.7.7.108"/>
    </reaction>
</comment>
<comment type="catalytic activity">
    <reaction evidence="1">
        <text>O-(5'-adenylyl)-L-tyrosyl-[protein] + ATP = O-[5'-(adenylyl-(5'-&gt;3')-adenylyl)]-L-tyrosyl-[protein] + diphosphate</text>
        <dbReference type="Rhea" id="RHEA:66528"/>
        <dbReference type="Rhea" id="RHEA-COMP:13846"/>
        <dbReference type="Rhea" id="RHEA-COMP:17046"/>
        <dbReference type="ChEBI" id="CHEBI:30616"/>
        <dbReference type="ChEBI" id="CHEBI:33019"/>
        <dbReference type="ChEBI" id="CHEBI:83624"/>
        <dbReference type="ChEBI" id="CHEBI:167160"/>
    </reaction>
</comment>
<comment type="cofactor">
    <cofactor evidence="2">
        <name>Mg(2+)</name>
        <dbReference type="ChEBI" id="CHEBI:18420"/>
    </cofactor>
    <text evidence="2">Binds 2 Mg(2+) ions.</text>
</comment>
<comment type="similarity">
    <text evidence="5">Belongs to the MntA antitoxin family.</text>
</comment>
<proteinExistence type="evidence at protein level"/>
<accession>I3ZRF1</accession>
<keyword id="KW-0067">ATP-binding</keyword>
<keyword id="KW-0460">Magnesium</keyword>
<keyword id="KW-0479">Metal-binding</keyword>
<keyword id="KW-0547">Nucleotide-binding</keyword>
<keyword id="KW-0548">Nucleotidyltransferase</keyword>
<keyword id="KW-1277">Toxin-antitoxin system</keyword>
<keyword id="KW-0808">Transferase</keyword>
<feature type="chain" id="PRO_0000452437" description="Protein adenylyltransferase MntA">
    <location>
        <begin position="1"/>
        <end position="99"/>
    </location>
</feature>
<feature type="short sequence motif" description="GSX(10)DXD motif" evidence="3">
    <location>
        <begin position="33"/>
        <end position="47"/>
    </location>
</feature>
<feature type="active site" evidence="1">
    <location>
        <position position="45"/>
    </location>
</feature>
<feature type="active site" evidence="1">
    <location>
        <position position="47"/>
    </location>
</feature>
<feature type="binding site" evidence="2">
    <location>
        <position position="45"/>
    </location>
    <ligand>
        <name>Mg(2+)</name>
        <dbReference type="ChEBI" id="CHEBI:18420"/>
        <label>1</label>
    </ligand>
</feature>
<feature type="binding site" evidence="2">
    <location>
        <position position="45"/>
    </location>
    <ligand>
        <name>Mg(2+)</name>
        <dbReference type="ChEBI" id="CHEBI:18420"/>
        <label>2</label>
    </ligand>
</feature>
<feature type="binding site" evidence="2">
    <location>
        <position position="47"/>
    </location>
    <ligand>
        <name>Mg(2+)</name>
        <dbReference type="ChEBI" id="CHEBI:18420"/>
        <label>1</label>
    </ligand>
</feature>
<feature type="binding site" evidence="2">
    <location>
        <position position="47"/>
    </location>
    <ligand>
        <name>Mg(2+)</name>
        <dbReference type="ChEBI" id="CHEBI:18420"/>
        <label>2</label>
    </ligand>
</feature>
<feature type="binding site" evidence="2">
    <location>
        <position position="77"/>
    </location>
    <ligand>
        <name>Mg(2+)</name>
        <dbReference type="ChEBI" id="CHEBI:18420"/>
        <label>1</label>
    </ligand>
</feature>
<feature type="mutagenesis site" description="No longer AMPylates HepT, does not neutralize HepT." evidence="3">
    <original>GS</original>
    <variation>AT</variation>
    <location>
        <begin position="33"/>
        <end position="34"/>
    </location>
</feature>
<feature type="mutagenesis site" description="No longer AMPylates HepT." evidence="3">
    <original>DVD</original>
    <variation>EVE</variation>
    <location>
        <begin position="45"/>
        <end position="47"/>
    </location>
</feature>
<protein>
    <recommendedName>
        <fullName>Protein adenylyltransferase MntA</fullName>
        <ecNumber evidence="3">2.7.7.108</ecNumber>
    </recommendedName>
    <alternativeName>
        <fullName evidence="4">Antitoxin MntA</fullName>
    </alternativeName>
</protein>
<sequence length="99" mass="11261">MAMLTLEEIESILTAHKKELRERFGVREIGVFGSYVRGEAKEDSDVDILVDFEEIPSLLKFIELEEYLEALLGLRVDLVMKSSLKSGIAKTVLREVVYV</sequence>
<name>MNTA_THECF</name>